<protein>
    <recommendedName>
        <fullName evidence="1">Large ribosomal subunit protein bL34</fullName>
    </recommendedName>
    <alternativeName>
        <fullName evidence="3">50S ribosomal protein L34</fullName>
    </alternativeName>
</protein>
<proteinExistence type="inferred from homology"/>
<name>RL34_RHIEC</name>
<keyword id="KW-1185">Reference proteome</keyword>
<keyword id="KW-0687">Ribonucleoprotein</keyword>
<keyword id="KW-0689">Ribosomal protein</keyword>
<dbReference type="EMBL" id="CP000133">
    <property type="protein sequence ID" value="ABC89261.1"/>
    <property type="molecule type" value="Genomic_DNA"/>
</dbReference>
<dbReference type="RefSeq" id="WP_008524438.1">
    <property type="nucleotide sequence ID" value="NC_007761.1"/>
</dbReference>
<dbReference type="SMR" id="Q2KD25"/>
<dbReference type="GeneID" id="91146898"/>
<dbReference type="KEGG" id="ret:RHE_CH00439"/>
<dbReference type="eggNOG" id="COG0230">
    <property type="taxonomic scope" value="Bacteria"/>
</dbReference>
<dbReference type="HOGENOM" id="CLU_129938_2_0_5"/>
<dbReference type="OrthoDB" id="9804164at2"/>
<dbReference type="Proteomes" id="UP000001936">
    <property type="component" value="Chromosome"/>
</dbReference>
<dbReference type="GO" id="GO:1990904">
    <property type="term" value="C:ribonucleoprotein complex"/>
    <property type="evidence" value="ECO:0007669"/>
    <property type="project" value="UniProtKB-KW"/>
</dbReference>
<dbReference type="GO" id="GO:0005840">
    <property type="term" value="C:ribosome"/>
    <property type="evidence" value="ECO:0007669"/>
    <property type="project" value="UniProtKB-KW"/>
</dbReference>
<dbReference type="GO" id="GO:0003735">
    <property type="term" value="F:structural constituent of ribosome"/>
    <property type="evidence" value="ECO:0007669"/>
    <property type="project" value="InterPro"/>
</dbReference>
<dbReference type="GO" id="GO:0006412">
    <property type="term" value="P:translation"/>
    <property type="evidence" value="ECO:0007669"/>
    <property type="project" value="UniProtKB-UniRule"/>
</dbReference>
<dbReference type="FunFam" id="1.10.287.3980:FF:000001">
    <property type="entry name" value="Mitochondrial ribosomal protein L34"/>
    <property type="match status" value="1"/>
</dbReference>
<dbReference type="Gene3D" id="1.10.287.3980">
    <property type="match status" value="1"/>
</dbReference>
<dbReference type="HAMAP" id="MF_00391">
    <property type="entry name" value="Ribosomal_bL34"/>
    <property type="match status" value="1"/>
</dbReference>
<dbReference type="InterPro" id="IPR000271">
    <property type="entry name" value="Ribosomal_bL34"/>
</dbReference>
<dbReference type="InterPro" id="IPR020939">
    <property type="entry name" value="Ribosomal_bL34_CS"/>
</dbReference>
<dbReference type="NCBIfam" id="TIGR01030">
    <property type="entry name" value="rpmH_bact"/>
    <property type="match status" value="1"/>
</dbReference>
<dbReference type="PANTHER" id="PTHR14503:SF4">
    <property type="entry name" value="LARGE RIBOSOMAL SUBUNIT PROTEIN BL34M"/>
    <property type="match status" value="1"/>
</dbReference>
<dbReference type="PANTHER" id="PTHR14503">
    <property type="entry name" value="MITOCHONDRIAL RIBOSOMAL PROTEIN 34 FAMILY MEMBER"/>
    <property type="match status" value="1"/>
</dbReference>
<dbReference type="Pfam" id="PF00468">
    <property type="entry name" value="Ribosomal_L34"/>
    <property type="match status" value="1"/>
</dbReference>
<dbReference type="PROSITE" id="PS00784">
    <property type="entry name" value="RIBOSOMAL_L34"/>
    <property type="match status" value="1"/>
</dbReference>
<organism>
    <name type="scientific">Rhizobium etli (strain ATCC 51251 / DSM 11541 / JCM 21823 / NBRC 15573 / CFN 42)</name>
    <dbReference type="NCBI Taxonomy" id="347834"/>
    <lineage>
        <taxon>Bacteria</taxon>
        <taxon>Pseudomonadati</taxon>
        <taxon>Pseudomonadota</taxon>
        <taxon>Alphaproteobacteria</taxon>
        <taxon>Hyphomicrobiales</taxon>
        <taxon>Rhizobiaceae</taxon>
        <taxon>Rhizobium/Agrobacterium group</taxon>
        <taxon>Rhizobium</taxon>
    </lineage>
</organism>
<accession>Q2KD25</accession>
<evidence type="ECO:0000255" key="1">
    <source>
        <dbReference type="HAMAP-Rule" id="MF_00391"/>
    </source>
</evidence>
<evidence type="ECO:0000256" key="2">
    <source>
        <dbReference type="SAM" id="MobiDB-lite"/>
    </source>
</evidence>
<evidence type="ECO:0000305" key="3"/>
<reference key="1">
    <citation type="journal article" date="2006" name="Proc. Natl. Acad. Sci. U.S.A.">
        <title>The partitioned Rhizobium etli genome: genetic and metabolic redundancy in seven interacting replicons.</title>
        <authorList>
            <person name="Gonzalez V."/>
            <person name="Santamaria R.I."/>
            <person name="Bustos P."/>
            <person name="Hernandez-Gonzalez I."/>
            <person name="Medrano-Soto A."/>
            <person name="Moreno-Hagelsieb G."/>
            <person name="Janga S.C."/>
            <person name="Ramirez M.A."/>
            <person name="Jimenez-Jacinto V."/>
            <person name="Collado-Vides J."/>
            <person name="Davila G."/>
        </authorList>
    </citation>
    <scope>NUCLEOTIDE SEQUENCE [LARGE SCALE GENOMIC DNA]</scope>
    <source>
        <strain>ATCC 51251 / DSM 11541 / JCM 21823 / NBRC 15573 / CFN 42</strain>
    </source>
</reference>
<sequence>MKRTYQPSKLVRKRRHGFRARMSTKGGRKVIAARRAQGRKRLSA</sequence>
<gene>
    <name evidence="1" type="primary">rpmH</name>
    <name type="ordered locus">RHE_CH00439</name>
</gene>
<comment type="similarity">
    <text evidence="1">Belongs to the bacterial ribosomal protein bL34 family.</text>
</comment>
<feature type="chain" id="PRO_1000013419" description="Large ribosomal subunit protein bL34">
    <location>
        <begin position="1"/>
        <end position="44"/>
    </location>
</feature>
<feature type="region of interest" description="Disordered" evidence="2">
    <location>
        <begin position="1"/>
        <end position="44"/>
    </location>
</feature>
<feature type="compositionally biased region" description="Basic residues" evidence="2">
    <location>
        <begin position="10"/>
        <end position="19"/>
    </location>
</feature>
<feature type="compositionally biased region" description="Basic residues" evidence="2">
    <location>
        <begin position="26"/>
        <end position="44"/>
    </location>
</feature>